<evidence type="ECO:0000255" key="1">
    <source>
        <dbReference type="PROSITE-ProRule" id="PRU00108"/>
    </source>
</evidence>
<evidence type="ECO:0000255" key="2">
    <source>
        <dbReference type="PROSITE-ProRule" id="PRU00138"/>
    </source>
</evidence>
<evidence type="ECO:0000256" key="3">
    <source>
        <dbReference type="SAM" id="MobiDB-lite"/>
    </source>
</evidence>
<evidence type="ECO:0000303" key="4">
    <source>
    </source>
</evidence>
<evidence type="ECO:0000303" key="5">
    <source>
    </source>
</evidence>
<evidence type="ECO:0000303" key="6">
    <source>
    </source>
</evidence>
<evidence type="ECO:0000305" key="7"/>
<proteinExistence type="evidence at protein level"/>
<dbReference type="EMBL" id="AJ002367">
    <property type="protein sequence ID" value="CAA05341.1"/>
    <property type="status" value="ALT_INIT"/>
    <property type="molecule type" value="mRNA"/>
</dbReference>
<dbReference type="EMBL" id="AJ002368">
    <property type="protein sequence ID" value="CAA05342.1"/>
    <property type="status" value="ALT_INIT"/>
    <property type="molecule type" value="mRNA"/>
</dbReference>
<dbReference type="EMBL" id="BC008829">
    <property type="protein sequence ID" value="AAH08829.1"/>
    <property type="molecule type" value="mRNA"/>
</dbReference>
<dbReference type="EMBL" id="AF022654">
    <property type="protein sequence ID" value="AAC39662.1"/>
    <property type="status" value="ALT_INIT"/>
    <property type="molecule type" value="mRNA"/>
</dbReference>
<dbReference type="EMBL" id="AF023203">
    <property type="protein sequence ID" value="AAC39663.1"/>
    <property type="molecule type" value="mRNA"/>
</dbReference>
<dbReference type="CCDS" id="CCDS33884.2">
    <molecule id="O60902-3"/>
</dbReference>
<dbReference type="CCDS" id="CCDS43164.1">
    <molecule id="O60902-1"/>
</dbReference>
<dbReference type="CCDS" id="CCDS54664.1">
    <molecule id="O60902-2"/>
</dbReference>
<dbReference type="RefSeq" id="NP_001157150.1">
    <molecule id="O60902-2"/>
    <property type="nucleotide sequence ID" value="NM_001163678.2"/>
</dbReference>
<dbReference type="RefSeq" id="NP_003021.3">
    <molecule id="O60902-3"/>
    <property type="nucleotide sequence ID" value="NM_003030.4"/>
</dbReference>
<dbReference type="RefSeq" id="NP_006875.2">
    <molecule id="O60902-1"/>
    <property type="nucleotide sequence ID" value="NM_006884.3"/>
</dbReference>
<dbReference type="RefSeq" id="XP_006713791.1">
    <property type="nucleotide sequence ID" value="XM_006713728.3"/>
</dbReference>
<dbReference type="RefSeq" id="XP_016862544.1">
    <property type="nucleotide sequence ID" value="XM_017007055.1"/>
</dbReference>
<dbReference type="SMR" id="O60902"/>
<dbReference type="BioGRID" id="112370">
    <property type="interactions" value="8"/>
</dbReference>
<dbReference type="FunCoup" id="O60902">
    <property type="interactions" value="1269"/>
</dbReference>
<dbReference type="IntAct" id="O60902">
    <property type="interactions" value="16"/>
</dbReference>
<dbReference type="STRING" id="9606.ENSP00000374240"/>
<dbReference type="iPTMnet" id="O60902"/>
<dbReference type="PhosphoSitePlus" id="O60902"/>
<dbReference type="BioMuta" id="SHOX2"/>
<dbReference type="jPOST" id="O60902"/>
<dbReference type="MassIVE" id="O60902"/>
<dbReference type="PaxDb" id="9606-ENSP00000374240"/>
<dbReference type="PeptideAtlas" id="O60902"/>
<dbReference type="ProteomicsDB" id="49660">
    <molecule id="O60902-1"/>
</dbReference>
<dbReference type="ProteomicsDB" id="49661">
    <molecule id="O60902-2"/>
</dbReference>
<dbReference type="ProteomicsDB" id="49662">
    <molecule id="O60902-3"/>
</dbReference>
<dbReference type="Antibodypedia" id="18427">
    <property type="antibodies" value="153 antibodies from 26 providers"/>
</dbReference>
<dbReference type="DNASU" id="6474"/>
<dbReference type="Ensembl" id="ENST00000389589.8">
    <molecule id="O60902-3"/>
    <property type="protein sequence ID" value="ENSP00000374240.4"/>
    <property type="gene ID" value="ENSG00000168779.21"/>
</dbReference>
<dbReference type="Ensembl" id="ENST00000441443.6">
    <molecule id="O60902-1"/>
    <property type="protein sequence ID" value="ENSP00000397099.3"/>
    <property type="gene ID" value="ENSG00000168779.21"/>
</dbReference>
<dbReference type="Ensembl" id="ENST00000483851.7">
    <molecule id="O60902-2"/>
    <property type="protein sequence ID" value="ENSP00000419362.1"/>
    <property type="gene ID" value="ENSG00000168779.21"/>
</dbReference>
<dbReference type="GeneID" id="6474"/>
<dbReference type="KEGG" id="hsa:6474"/>
<dbReference type="MANE-Select" id="ENST00000483851.7">
    <molecule id="O60902-2"/>
    <property type="protein sequence ID" value="ENSP00000419362.1"/>
    <property type="RefSeq nucleotide sequence ID" value="NM_001163678.2"/>
    <property type="RefSeq protein sequence ID" value="NP_001157150.1"/>
</dbReference>
<dbReference type="UCSC" id="uc003fbr.4">
    <molecule id="O60902-1"/>
    <property type="organism name" value="human"/>
</dbReference>
<dbReference type="AGR" id="HGNC:10854"/>
<dbReference type="CTD" id="6474"/>
<dbReference type="DisGeNET" id="6474"/>
<dbReference type="GeneCards" id="SHOX2"/>
<dbReference type="HGNC" id="HGNC:10854">
    <property type="gene designation" value="SHOX2"/>
</dbReference>
<dbReference type="HPA" id="ENSG00000168779">
    <property type="expression patterns" value="Tissue enhanced (adipose tissue, breast, cervix)"/>
</dbReference>
<dbReference type="MalaCards" id="SHOX2"/>
<dbReference type="MIM" id="602504">
    <property type="type" value="gene"/>
</dbReference>
<dbReference type="neXtProt" id="NX_O60902"/>
<dbReference type="OpenTargets" id="ENSG00000168779"/>
<dbReference type="PharmGKB" id="PA35756"/>
<dbReference type="VEuPathDB" id="HostDB:ENSG00000168779"/>
<dbReference type="eggNOG" id="KOG0490">
    <property type="taxonomic scope" value="Eukaryota"/>
</dbReference>
<dbReference type="GeneTree" id="ENSGT00940000154287"/>
<dbReference type="HOGENOM" id="CLU_047013_5_0_1"/>
<dbReference type="InParanoid" id="O60902"/>
<dbReference type="OMA" id="DSHCNMP"/>
<dbReference type="OrthoDB" id="6159439at2759"/>
<dbReference type="PAN-GO" id="O60902">
    <property type="GO annotations" value="4 GO annotations based on evolutionary models"/>
</dbReference>
<dbReference type="PhylomeDB" id="O60902"/>
<dbReference type="TreeFam" id="TF350757"/>
<dbReference type="PathwayCommons" id="O60902"/>
<dbReference type="SignaLink" id="O60902"/>
<dbReference type="BioGRID-ORCS" id="6474">
    <property type="hits" value="20 hits in 1177 CRISPR screens"/>
</dbReference>
<dbReference type="GeneWiki" id="SHOX2"/>
<dbReference type="GenomeRNAi" id="6474"/>
<dbReference type="Pharos" id="O60902">
    <property type="development level" value="Tbio"/>
</dbReference>
<dbReference type="PRO" id="PR:O60902"/>
<dbReference type="Proteomes" id="UP000005640">
    <property type="component" value="Chromosome 3"/>
</dbReference>
<dbReference type="RNAct" id="O60902">
    <property type="molecule type" value="protein"/>
</dbReference>
<dbReference type="Bgee" id="ENSG00000168779">
    <property type="expression patterns" value="Expressed in buccal mucosa cell and 113 other cell types or tissues"/>
</dbReference>
<dbReference type="ExpressionAtlas" id="O60902">
    <property type="expression patterns" value="baseline and differential"/>
</dbReference>
<dbReference type="GO" id="GO:0000785">
    <property type="term" value="C:chromatin"/>
    <property type="evidence" value="ECO:0000247"/>
    <property type="project" value="NTNU_SB"/>
</dbReference>
<dbReference type="GO" id="GO:0005634">
    <property type="term" value="C:nucleus"/>
    <property type="evidence" value="ECO:0000318"/>
    <property type="project" value="GO_Central"/>
</dbReference>
<dbReference type="GO" id="GO:0000981">
    <property type="term" value="F:DNA-binding transcription factor activity, RNA polymerase II-specific"/>
    <property type="evidence" value="ECO:0000247"/>
    <property type="project" value="NTNU_SB"/>
</dbReference>
<dbReference type="GO" id="GO:1990837">
    <property type="term" value="F:sequence-specific double-stranded DNA binding"/>
    <property type="evidence" value="ECO:0000318"/>
    <property type="project" value="GO_Central"/>
</dbReference>
<dbReference type="GO" id="GO:0060920">
    <property type="term" value="P:cardiac pacemaker cell differentiation"/>
    <property type="evidence" value="ECO:0000250"/>
    <property type="project" value="BHF-UCL"/>
</dbReference>
<dbReference type="GO" id="GO:0003213">
    <property type="term" value="P:cardiac right atrium morphogenesis"/>
    <property type="evidence" value="ECO:0000250"/>
    <property type="project" value="BHF-UCL"/>
</dbReference>
<dbReference type="GO" id="GO:0060351">
    <property type="term" value="P:cartilage development involved in endochondral bone morphogenesis"/>
    <property type="evidence" value="ECO:0007669"/>
    <property type="project" value="Ensembl"/>
</dbReference>
<dbReference type="GO" id="GO:0002063">
    <property type="term" value="P:chondrocyte development"/>
    <property type="evidence" value="ECO:0007669"/>
    <property type="project" value="Ensembl"/>
</dbReference>
<dbReference type="GO" id="GO:0048557">
    <property type="term" value="P:embryonic digestive tract morphogenesis"/>
    <property type="evidence" value="ECO:0007669"/>
    <property type="project" value="Ensembl"/>
</dbReference>
<dbReference type="GO" id="GO:0035115">
    <property type="term" value="P:embryonic forelimb morphogenesis"/>
    <property type="evidence" value="ECO:0007669"/>
    <property type="project" value="Ensembl"/>
</dbReference>
<dbReference type="GO" id="GO:0060272">
    <property type="term" value="P:embryonic skeletal joint morphogenesis"/>
    <property type="evidence" value="ECO:0007669"/>
    <property type="project" value="Ensembl"/>
</dbReference>
<dbReference type="GO" id="GO:0010463">
    <property type="term" value="P:mesenchymal cell proliferation"/>
    <property type="evidence" value="ECO:0007669"/>
    <property type="project" value="Ensembl"/>
</dbReference>
<dbReference type="GO" id="GO:0060415">
    <property type="term" value="P:muscle tissue morphogenesis"/>
    <property type="evidence" value="ECO:0007669"/>
    <property type="project" value="Ensembl"/>
</dbReference>
<dbReference type="GO" id="GO:0000122">
    <property type="term" value="P:negative regulation of transcription by RNA polymerase II"/>
    <property type="evidence" value="ECO:0000250"/>
    <property type="project" value="BHF-UCL"/>
</dbReference>
<dbReference type="GO" id="GO:0007399">
    <property type="term" value="P:nervous system development"/>
    <property type="evidence" value="ECO:0000304"/>
    <property type="project" value="ProtInc"/>
</dbReference>
<dbReference type="GO" id="GO:0001649">
    <property type="term" value="P:osteoblast differentiation"/>
    <property type="evidence" value="ECO:0007669"/>
    <property type="project" value="Ensembl"/>
</dbReference>
<dbReference type="GO" id="GO:0050772">
    <property type="term" value="P:positive regulation of axonogenesis"/>
    <property type="evidence" value="ECO:0007669"/>
    <property type="project" value="Ensembl"/>
</dbReference>
<dbReference type="GO" id="GO:0002053">
    <property type="term" value="P:positive regulation of mesenchymal cell proliferation"/>
    <property type="evidence" value="ECO:0007669"/>
    <property type="project" value="Ensembl"/>
</dbReference>
<dbReference type="GO" id="GO:0048743">
    <property type="term" value="P:positive regulation of skeletal muscle fiber development"/>
    <property type="evidence" value="ECO:0007669"/>
    <property type="project" value="Ensembl"/>
</dbReference>
<dbReference type="GO" id="GO:0045880">
    <property type="term" value="P:positive regulation of smoothened signaling pathway"/>
    <property type="evidence" value="ECO:0007669"/>
    <property type="project" value="Ensembl"/>
</dbReference>
<dbReference type="GO" id="GO:2000648">
    <property type="term" value="P:positive regulation of stem cell proliferation"/>
    <property type="evidence" value="ECO:0007669"/>
    <property type="project" value="Ensembl"/>
</dbReference>
<dbReference type="GO" id="GO:2000172">
    <property type="term" value="P:regulation of branching morphogenesis of a nerve"/>
    <property type="evidence" value="ECO:0007669"/>
    <property type="project" value="Ensembl"/>
</dbReference>
<dbReference type="GO" id="GO:0032330">
    <property type="term" value="P:regulation of chondrocyte differentiation"/>
    <property type="evidence" value="ECO:0007669"/>
    <property type="project" value="Ensembl"/>
</dbReference>
<dbReference type="GO" id="GO:0002027">
    <property type="term" value="P:regulation of heart rate"/>
    <property type="evidence" value="ECO:0000250"/>
    <property type="project" value="BHF-UCL"/>
</dbReference>
<dbReference type="GO" id="GO:0006357">
    <property type="term" value="P:regulation of transcription by RNA polymerase II"/>
    <property type="evidence" value="ECO:0000318"/>
    <property type="project" value="GO_Central"/>
</dbReference>
<dbReference type="GO" id="GO:0060931">
    <property type="term" value="P:sinoatrial node cell development"/>
    <property type="evidence" value="ECO:0000250"/>
    <property type="project" value="BHF-UCL"/>
</dbReference>
<dbReference type="GO" id="GO:0003163">
    <property type="term" value="P:sinoatrial node development"/>
    <property type="evidence" value="ECO:0000250"/>
    <property type="project" value="BHF-UCL"/>
</dbReference>
<dbReference type="GO" id="GO:0003172">
    <property type="term" value="P:sinoatrial valve development"/>
    <property type="evidence" value="ECO:0000250"/>
    <property type="project" value="BHF-UCL"/>
</dbReference>
<dbReference type="GO" id="GO:0001501">
    <property type="term" value="P:skeletal system development"/>
    <property type="evidence" value="ECO:0000304"/>
    <property type="project" value="ProtInc"/>
</dbReference>
<dbReference type="GO" id="GO:0007224">
    <property type="term" value="P:smoothened signaling pathway"/>
    <property type="evidence" value="ECO:0007669"/>
    <property type="project" value="Ensembl"/>
</dbReference>
<dbReference type="GO" id="GO:0072089">
    <property type="term" value="P:stem cell proliferation"/>
    <property type="evidence" value="ECO:0007669"/>
    <property type="project" value="Ensembl"/>
</dbReference>
<dbReference type="CDD" id="cd00086">
    <property type="entry name" value="homeodomain"/>
    <property type="match status" value="1"/>
</dbReference>
<dbReference type="FunFam" id="1.10.10.60:FF:000057">
    <property type="entry name" value="Short stature homeobox 2"/>
    <property type="match status" value="1"/>
</dbReference>
<dbReference type="Gene3D" id="1.10.10.60">
    <property type="entry name" value="Homeodomain-like"/>
    <property type="match status" value="1"/>
</dbReference>
<dbReference type="InterPro" id="IPR001356">
    <property type="entry name" value="HD"/>
</dbReference>
<dbReference type="InterPro" id="IPR017970">
    <property type="entry name" value="Homeobox_CS"/>
</dbReference>
<dbReference type="InterPro" id="IPR009057">
    <property type="entry name" value="Homeodomain-like_sf"/>
</dbReference>
<dbReference type="InterPro" id="IPR000047">
    <property type="entry name" value="HTH_motif"/>
</dbReference>
<dbReference type="InterPro" id="IPR003654">
    <property type="entry name" value="OAR_dom"/>
</dbReference>
<dbReference type="InterPro" id="IPR052631">
    <property type="entry name" value="Paired_homeobox_Bicoid"/>
</dbReference>
<dbReference type="PANTHER" id="PTHR46255">
    <property type="entry name" value="SHORT STATURE HOMEOBOX"/>
    <property type="match status" value="1"/>
</dbReference>
<dbReference type="PANTHER" id="PTHR46255:SF1">
    <property type="entry name" value="SHORT STATURE HOMEOBOX PROTEIN 2"/>
    <property type="match status" value="1"/>
</dbReference>
<dbReference type="Pfam" id="PF00046">
    <property type="entry name" value="Homeodomain"/>
    <property type="match status" value="1"/>
</dbReference>
<dbReference type="Pfam" id="PF03826">
    <property type="entry name" value="OAR"/>
    <property type="match status" value="1"/>
</dbReference>
<dbReference type="PRINTS" id="PR00031">
    <property type="entry name" value="HTHREPRESSR"/>
</dbReference>
<dbReference type="SMART" id="SM00389">
    <property type="entry name" value="HOX"/>
    <property type="match status" value="1"/>
</dbReference>
<dbReference type="SUPFAM" id="SSF46689">
    <property type="entry name" value="Homeodomain-like"/>
    <property type="match status" value="1"/>
</dbReference>
<dbReference type="PROSITE" id="PS00027">
    <property type="entry name" value="HOMEOBOX_1"/>
    <property type="match status" value="1"/>
</dbReference>
<dbReference type="PROSITE" id="PS50071">
    <property type="entry name" value="HOMEOBOX_2"/>
    <property type="match status" value="1"/>
</dbReference>
<dbReference type="PROSITE" id="PS50803">
    <property type="entry name" value="OAR"/>
    <property type="match status" value="1"/>
</dbReference>
<protein>
    <recommendedName>
        <fullName>Short stature homeobox protein 2</fullName>
    </recommendedName>
    <alternativeName>
        <fullName>Homeobox protein Og12X</fullName>
    </alternativeName>
    <alternativeName>
        <fullName>Paired-related homeobox protein SHOT</fullName>
    </alternativeName>
</protein>
<feature type="chain" id="PRO_0000049292" description="Short stature homeobox protein 2">
    <location>
        <begin position="1"/>
        <end position="331"/>
    </location>
</feature>
<feature type="DNA-binding region" description="Homeobox" evidence="1">
    <location>
        <begin position="140"/>
        <end position="199"/>
    </location>
</feature>
<feature type="region of interest" description="Disordered" evidence="3">
    <location>
        <begin position="27"/>
        <end position="140"/>
    </location>
</feature>
<feature type="short sequence motif" description="OAR" evidence="2">
    <location>
        <begin position="313"/>
        <end position="326"/>
    </location>
</feature>
<feature type="compositionally biased region" description="Gly residues" evidence="3">
    <location>
        <begin position="59"/>
        <end position="91"/>
    </location>
</feature>
<feature type="compositionally biased region" description="Basic and acidic residues" evidence="3">
    <location>
        <begin position="93"/>
        <end position="109"/>
    </location>
</feature>
<feature type="compositionally biased region" description="Basic and acidic residues" evidence="3">
    <location>
        <begin position="118"/>
        <end position="136"/>
    </location>
</feature>
<feature type="splice variant" id="VSP_024427" description="In isoform 3." evidence="4">
    <original>E</original>
    <variation>EGRRKPTKAEVQATLLLPGEAFRFL</variation>
    <location>
        <position position="115"/>
    </location>
</feature>
<feature type="splice variant" id="VSP_002288" description="In isoform 2." evidence="5 6">
    <location>
        <begin position="235"/>
        <end position="246"/>
    </location>
</feature>
<feature type="sequence conflict" description="In Ref. 1; CAA05341." evidence="7" ref="1">
    <original>E</original>
    <variation>D</variation>
    <location>
        <position position="125"/>
    </location>
</feature>
<feature type="sequence conflict" description="In Ref. 1; CAA05341." evidence="7" ref="1">
    <original>S</original>
    <variation>P</variation>
    <location>
        <position position="244"/>
    </location>
</feature>
<feature type="sequence conflict" description="In Ref. 1; CAA05341/CAA05342." evidence="7" ref="1">
    <original>N</original>
    <variation>D</variation>
    <location>
        <position position="312"/>
    </location>
</feature>
<feature type="sequence conflict" description="In Ref. 3; AAC39663." evidence="7" ref="3">
    <original>H</original>
    <variation>L</variation>
    <location>
        <position position="325"/>
    </location>
</feature>
<gene>
    <name type="primary">SHOX2</name>
    <name type="synonym">OG12X</name>
    <name type="synonym">SHOT</name>
</gene>
<reference key="1">
    <citation type="journal article" date="1998" name="Proc. Natl. Acad. Sci. U.S.A.">
        <title>SHOT, a SHOX-related homeobox gene, is implicated in craniofacial, brain, heart, and limb development.</title>
        <authorList>
            <person name="Blaschke R.J."/>
            <person name="Monaghan A.P."/>
            <person name="Schiller S."/>
            <person name="Schechinger B."/>
            <person name="Rao E."/>
            <person name="Padilla-Nash H."/>
            <person name="Ried T."/>
            <person name="Rappold G.A."/>
        </authorList>
    </citation>
    <scope>NUCLEOTIDE SEQUENCE [MRNA] (ISOFORMS 1 AND 2)</scope>
    <source>
        <tissue>Fibroblast</tissue>
    </source>
</reference>
<reference key="2">
    <citation type="journal article" date="2004" name="Genome Res.">
        <title>The status, quality, and expansion of the NIH full-length cDNA project: the Mammalian Gene Collection (MGC).</title>
        <authorList>
            <consortium name="The MGC Project Team"/>
        </authorList>
    </citation>
    <scope>NUCLEOTIDE SEQUENCE [LARGE SCALE MRNA] (ISOFORM 3)</scope>
    <source>
        <tissue>Muscle</tissue>
    </source>
</reference>
<reference key="3">
    <citation type="journal article" date="1998" name="Hum. Mol. Genet.">
        <title>A new human homeobox gene OG12X is a member of the most conserved homeobox gene family and is expressed during heart development in mouse.</title>
        <authorList>
            <person name="Semina E.V."/>
            <person name="Reiter R.S."/>
            <person name="Murray J.C."/>
        </authorList>
    </citation>
    <scope>NUCLEOTIDE SEQUENCE [MRNA] OF 116-331 (ISOFORM 2)</scope>
    <source>
        <tissue>Craniofacial</tissue>
    </source>
</reference>
<reference key="4">
    <citation type="journal article" date="2004" name="Genome Biol.">
        <title>An unappreciated role for RNA surveillance.</title>
        <authorList>
            <person name="Hillman R.T."/>
            <person name="Green R.E."/>
            <person name="Brenner S.E."/>
        </authorList>
    </citation>
    <scope>SPLICE ISOFORM(S) THAT ARE POTENTIAL NMD TARGET(S)</scope>
</reference>
<comment type="function">
    <text>May be a growth regulator and have a role in specifying neural systems involved in processing somatosensory information, as well as in face and body structure formation.</text>
</comment>
<comment type="interaction">
    <interactant intactId="EBI-9092164">
        <id>O60902-3</id>
    </interactant>
    <interactant intactId="EBI-718729">
        <id>P55212</id>
        <label>CASP6</label>
    </interactant>
    <organismsDiffer>false</organismsDiffer>
    <experiments>3</experiments>
</comment>
<comment type="interaction">
    <interactant intactId="EBI-9092164">
        <id>O60902-3</id>
    </interactant>
    <interactant intactId="EBI-355710">
        <id>P48643</id>
        <label>CCT5</label>
    </interactant>
    <organismsDiffer>false</organismsDiffer>
    <experiments>3</experiments>
</comment>
<comment type="interaction">
    <interactant intactId="EBI-9092164">
        <id>O60902-3</id>
    </interactant>
    <interactant intactId="EBI-745535">
        <id>Q8NI60</id>
        <label>COQ8A</label>
    </interactant>
    <organismsDiffer>false</organismsDiffer>
    <experiments>3</experiments>
</comment>
<comment type="interaction">
    <interactant intactId="EBI-9092164">
        <id>O60902-3</id>
    </interactant>
    <interactant intactId="EBI-348399">
        <id>P22607</id>
        <label>FGFR3</label>
    </interactant>
    <organismsDiffer>false</organismsDiffer>
    <experiments>3</experiments>
</comment>
<comment type="interaction">
    <interactant intactId="EBI-9092164">
        <id>O60902-3</id>
    </interactant>
    <interactant intactId="EBI-8285963">
        <id>Q14957</id>
        <label>GRIN2C</label>
    </interactant>
    <organismsDiffer>false</organismsDiffer>
    <experiments>3</experiments>
</comment>
<comment type="interaction">
    <interactant intactId="EBI-9092164">
        <id>O60902-3</id>
    </interactant>
    <interactant intactId="EBI-747754">
        <id>P28799</id>
        <label>GRN</label>
    </interactant>
    <organismsDiffer>false</organismsDiffer>
    <experiments>3</experiments>
</comment>
<comment type="interaction">
    <interactant intactId="EBI-9092164">
        <id>O60902-3</id>
    </interactant>
    <interactant intactId="EBI-10975473">
        <id>O60333-2</id>
        <label>KIF1B</label>
    </interactant>
    <organismsDiffer>false</organismsDiffer>
    <experiments>3</experiments>
</comment>
<comment type="interaction">
    <interactant intactId="EBI-9092164">
        <id>O60902-3</id>
    </interactant>
    <interactant intactId="EBI-21591415">
        <id>P13473-2</id>
        <label>LAMP2</label>
    </interactant>
    <organismsDiffer>false</organismsDiffer>
    <experiments>3</experiments>
</comment>
<comment type="interaction">
    <interactant intactId="EBI-9092164">
        <id>O60902-3</id>
    </interactant>
    <interactant intactId="EBI-473160">
        <id>Q8N2W9</id>
        <label>PIAS4</label>
    </interactant>
    <organismsDiffer>false</organismsDiffer>
    <experiments>3</experiments>
</comment>
<comment type="interaction">
    <interactant intactId="EBI-9092164">
        <id>O60902-3</id>
    </interactant>
    <interactant intactId="EBI-5280197">
        <id>O75400-2</id>
        <label>PRPF40A</label>
    </interactant>
    <organismsDiffer>false</organismsDiffer>
    <experiments>3</experiments>
</comment>
<comment type="interaction">
    <interactant intactId="EBI-9092164">
        <id>O60902-3</id>
    </interactant>
    <interactant intactId="EBI-396669">
        <id>Q9Y3C5</id>
        <label>RNF11</label>
    </interactant>
    <organismsDiffer>false</organismsDiffer>
    <experiments>3</experiments>
</comment>
<comment type="interaction">
    <interactant intactId="EBI-9092164">
        <id>O60902-3</id>
    </interactant>
    <interactant intactId="EBI-720609">
        <id>O76024</id>
        <label>WFS1</label>
    </interactant>
    <organismsDiffer>false</organismsDiffer>
    <experiments>3</experiments>
</comment>
<comment type="subcellular location">
    <subcellularLocation>
        <location>Nucleus</location>
    </subcellularLocation>
</comment>
<comment type="alternative products">
    <event type="alternative splicing"/>
    <isoform>
        <id>O60902-1</id>
        <name>1</name>
        <name>SHOX2A</name>
        <name>SHOTA</name>
        <sequence type="displayed"/>
    </isoform>
    <isoform>
        <id>O60902-2</id>
        <name>2</name>
        <name>SHOX2B</name>
        <name>SHOTB</name>
        <name>OG12XB</name>
        <sequence type="described" ref="VSP_002288"/>
    </isoform>
    <isoform>
        <id>O60902-3</id>
        <name>3</name>
        <sequence type="described" ref="VSP_024427"/>
    </isoform>
</comment>
<comment type="tissue specificity">
    <text>Expressed in heart, skeletal muscle, liver, lung, bone marrow fibroblast, pancreas and placenta.</text>
</comment>
<comment type="developmental stage">
    <text>Expressed during cranofacial development as well as in heart.</text>
</comment>
<comment type="miscellaneous">
    <molecule>Isoform 1</molecule>
    <text>May be produced at very low levels due to a premature stop codon in the mRNA, leading to nonsense-mediated mRNA decay.</text>
</comment>
<comment type="similarity">
    <text evidence="7">Belongs to the paired homeobox family. Bicoid subfamily.</text>
</comment>
<comment type="sequence caution" evidence="7">
    <conflict type="erroneous initiation">
        <sequence resource="EMBL-CDS" id="AAC39662"/>
    </conflict>
</comment>
<comment type="sequence caution" evidence="7">
    <conflict type="erroneous initiation">
        <sequence resource="EMBL-CDS" id="CAA05341"/>
    </conflict>
</comment>
<comment type="sequence caution" evidence="7">
    <conflict type="erroneous initiation">
        <sequence resource="EMBL-CDS" id="CAA05342"/>
    </conflict>
</comment>
<name>SHOX2_HUMAN</name>
<sequence>MEELTAFVSKSFDQKVKEKKEAITYREVLESGPLRGAKEPTGCTEAGRDDRSSPAVRAAGGGGGGGGGGGGGGGGGGVGGGGAGGGAGGGRSPVRELDMGAAERSREPGSPRLTEVSPELKDRKEDAKGMEDEGQTKIKQRRSRTNFTLEQLNELERLFDETHYPDAFMREELSQRLGLSEARVQVWFQNRRAKCRKQENQLHKGVLIGAASQFEACRVAPYVNVGALRMPFQQDSHCNVTPLSFQVQAQLQLDSAVAHAHHHLHPHLAAHAPYMMFPAPPFGLPLATLAADSASAASVVAAAAAAKTTSKNSSIADLRLKAKKHAAALGL</sequence>
<organism>
    <name type="scientific">Homo sapiens</name>
    <name type="common">Human</name>
    <dbReference type="NCBI Taxonomy" id="9606"/>
    <lineage>
        <taxon>Eukaryota</taxon>
        <taxon>Metazoa</taxon>
        <taxon>Chordata</taxon>
        <taxon>Craniata</taxon>
        <taxon>Vertebrata</taxon>
        <taxon>Euteleostomi</taxon>
        <taxon>Mammalia</taxon>
        <taxon>Eutheria</taxon>
        <taxon>Euarchontoglires</taxon>
        <taxon>Primates</taxon>
        <taxon>Haplorrhini</taxon>
        <taxon>Catarrhini</taxon>
        <taxon>Hominidae</taxon>
        <taxon>Homo</taxon>
    </lineage>
</organism>
<keyword id="KW-0025">Alternative splicing</keyword>
<keyword id="KW-0217">Developmental protein</keyword>
<keyword id="KW-0238">DNA-binding</keyword>
<keyword id="KW-0371">Homeobox</keyword>
<keyword id="KW-0539">Nucleus</keyword>
<keyword id="KW-1267">Proteomics identification</keyword>
<keyword id="KW-1185">Reference proteome</keyword>
<accession>O60902</accession>
<accession>O60465</accession>
<accession>O60467</accession>
<accession>O60903</accession>